<feature type="chain" id="PRO_0000115411" description="Small ribosomal subunit protein uS15">
    <location>
        <begin position="1"/>
        <end position="89"/>
    </location>
</feature>
<reference key="1">
    <citation type="journal article" date="2000" name="Nucleic Acids Res.">
        <title>Genome sequences of Chlamydia trachomatis MoPn and Chlamydia pneumoniae AR39.</title>
        <authorList>
            <person name="Read T.D."/>
            <person name="Brunham R.C."/>
            <person name="Shen C."/>
            <person name="Gill S.R."/>
            <person name="Heidelberg J.F."/>
            <person name="White O."/>
            <person name="Hickey E.K."/>
            <person name="Peterson J.D."/>
            <person name="Utterback T.R."/>
            <person name="Berry K.J."/>
            <person name="Bass S."/>
            <person name="Linher K.D."/>
            <person name="Weidman J.F."/>
            <person name="Khouri H.M."/>
            <person name="Craven B."/>
            <person name="Bowman C."/>
            <person name="Dodson R.J."/>
            <person name="Gwinn M.L."/>
            <person name="Nelson W.C."/>
            <person name="DeBoy R.T."/>
            <person name="Kolonay J.F."/>
            <person name="McClarty G."/>
            <person name="Salzberg S.L."/>
            <person name="Eisen J.A."/>
            <person name="Fraser C.M."/>
        </authorList>
    </citation>
    <scope>NUCLEOTIDE SEQUENCE [LARGE SCALE GENOMIC DNA]</scope>
    <source>
        <strain>MoPn / Nigg</strain>
    </source>
</reference>
<gene>
    <name evidence="1" type="primary">rpsO</name>
    <name type="synonym">rs15</name>
    <name type="ordered locus">TC_0231</name>
</gene>
<protein>
    <recommendedName>
        <fullName evidence="1">Small ribosomal subunit protein uS15</fullName>
    </recommendedName>
    <alternativeName>
        <fullName evidence="2">30S ribosomal protein S15</fullName>
    </alternativeName>
</protein>
<name>RS15_CHLMU</name>
<sequence>MSLDKGTKEEITKKFQLHEKDTGSADVQIAILTEHITELKEHLKRSPKDQNSRLALLKLVGQRRKLLEYLNSTDTERYKNLIARLNLRK</sequence>
<accession>P66428</accession>
<accession>O84850</accession>
<dbReference type="EMBL" id="AE002160">
    <property type="protein sequence ID" value="AAF39103.1"/>
    <property type="molecule type" value="Genomic_DNA"/>
</dbReference>
<dbReference type="PIR" id="H81725">
    <property type="entry name" value="H81725"/>
</dbReference>
<dbReference type="RefSeq" id="WP_009872230.1">
    <property type="nucleotide sequence ID" value="NZ_CP063055.1"/>
</dbReference>
<dbReference type="SMR" id="P66428"/>
<dbReference type="GeneID" id="93065722"/>
<dbReference type="KEGG" id="cmu:TC_0231"/>
<dbReference type="eggNOG" id="COG0184">
    <property type="taxonomic scope" value="Bacteria"/>
</dbReference>
<dbReference type="HOGENOM" id="CLU_148518_0_0_0"/>
<dbReference type="OrthoDB" id="9799262at2"/>
<dbReference type="Proteomes" id="UP000000800">
    <property type="component" value="Chromosome"/>
</dbReference>
<dbReference type="GO" id="GO:0022627">
    <property type="term" value="C:cytosolic small ribosomal subunit"/>
    <property type="evidence" value="ECO:0007669"/>
    <property type="project" value="TreeGrafter"/>
</dbReference>
<dbReference type="GO" id="GO:0019843">
    <property type="term" value="F:rRNA binding"/>
    <property type="evidence" value="ECO:0007669"/>
    <property type="project" value="UniProtKB-UniRule"/>
</dbReference>
<dbReference type="GO" id="GO:0003735">
    <property type="term" value="F:structural constituent of ribosome"/>
    <property type="evidence" value="ECO:0007669"/>
    <property type="project" value="InterPro"/>
</dbReference>
<dbReference type="GO" id="GO:0006412">
    <property type="term" value="P:translation"/>
    <property type="evidence" value="ECO:0007669"/>
    <property type="project" value="UniProtKB-UniRule"/>
</dbReference>
<dbReference type="CDD" id="cd00353">
    <property type="entry name" value="Ribosomal_S15p_S13e"/>
    <property type="match status" value="1"/>
</dbReference>
<dbReference type="FunFam" id="1.10.287.10:FF:000002">
    <property type="entry name" value="30S ribosomal protein S15"/>
    <property type="match status" value="1"/>
</dbReference>
<dbReference type="Gene3D" id="6.10.250.3130">
    <property type="match status" value="1"/>
</dbReference>
<dbReference type="Gene3D" id="1.10.287.10">
    <property type="entry name" value="S15/NS1, RNA-binding"/>
    <property type="match status" value="1"/>
</dbReference>
<dbReference type="HAMAP" id="MF_01343_B">
    <property type="entry name" value="Ribosomal_uS15_B"/>
    <property type="match status" value="1"/>
</dbReference>
<dbReference type="InterPro" id="IPR000589">
    <property type="entry name" value="Ribosomal_uS15"/>
</dbReference>
<dbReference type="InterPro" id="IPR005290">
    <property type="entry name" value="Ribosomal_uS15_bac-type"/>
</dbReference>
<dbReference type="InterPro" id="IPR009068">
    <property type="entry name" value="uS15_NS1_RNA-bd_sf"/>
</dbReference>
<dbReference type="NCBIfam" id="TIGR00952">
    <property type="entry name" value="S15_bact"/>
    <property type="match status" value="1"/>
</dbReference>
<dbReference type="PANTHER" id="PTHR23321">
    <property type="entry name" value="RIBOSOMAL PROTEIN S15, BACTERIAL AND ORGANELLAR"/>
    <property type="match status" value="1"/>
</dbReference>
<dbReference type="PANTHER" id="PTHR23321:SF26">
    <property type="entry name" value="SMALL RIBOSOMAL SUBUNIT PROTEIN US15M"/>
    <property type="match status" value="1"/>
</dbReference>
<dbReference type="Pfam" id="PF00312">
    <property type="entry name" value="Ribosomal_S15"/>
    <property type="match status" value="1"/>
</dbReference>
<dbReference type="SMART" id="SM01387">
    <property type="entry name" value="Ribosomal_S15"/>
    <property type="match status" value="1"/>
</dbReference>
<dbReference type="SUPFAM" id="SSF47060">
    <property type="entry name" value="S15/NS1 RNA-binding domain"/>
    <property type="match status" value="1"/>
</dbReference>
<dbReference type="PROSITE" id="PS00362">
    <property type="entry name" value="RIBOSOMAL_S15"/>
    <property type="match status" value="1"/>
</dbReference>
<comment type="function">
    <text evidence="1">One of the primary rRNA binding proteins, it binds directly to 16S rRNA where it helps nucleate assembly of the platform of the 30S subunit by binding and bridging several RNA helices of the 16S rRNA.</text>
</comment>
<comment type="function">
    <text evidence="1">Forms an intersubunit bridge (bridge B4) with the 23S rRNA of the 50S subunit in the ribosome.</text>
</comment>
<comment type="subunit">
    <text evidence="1">Part of the 30S ribosomal subunit. Forms a bridge to the 50S subunit in the 70S ribosome, contacting the 23S rRNA.</text>
</comment>
<comment type="similarity">
    <text evidence="1">Belongs to the universal ribosomal protein uS15 family.</text>
</comment>
<keyword id="KW-0687">Ribonucleoprotein</keyword>
<keyword id="KW-0689">Ribosomal protein</keyword>
<keyword id="KW-0694">RNA-binding</keyword>
<keyword id="KW-0699">rRNA-binding</keyword>
<organism>
    <name type="scientific">Chlamydia muridarum (strain MoPn / Nigg)</name>
    <dbReference type="NCBI Taxonomy" id="243161"/>
    <lineage>
        <taxon>Bacteria</taxon>
        <taxon>Pseudomonadati</taxon>
        <taxon>Chlamydiota</taxon>
        <taxon>Chlamydiia</taxon>
        <taxon>Chlamydiales</taxon>
        <taxon>Chlamydiaceae</taxon>
        <taxon>Chlamydia/Chlamydophila group</taxon>
        <taxon>Chlamydia</taxon>
    </lineage>
</organism>
<proteinExistence type="inferred from homology"/>
<evidence type="ECO:0000255" key="1">
    <source>
        <dbReference type="HAMAP-Rule" id="MF_01343"/>
    </source>
</evidence>
<evidence type="ECO:0000305" key="2"/>